<name>DXR_RHOBA</name>
<comment type="function">
    <text evidence="1">Catalyzes the NADPH-dependent rearrangement and reduction of 1-deoxy-D-xylulose-5-phosphate (DXP) to 2-C-methyl-D-erythritol 4-phosphate (MEP).</text>
</comment>
<comment type="catalytic activity">
    <reaction evidence="1">
        <text>2-C-methyl-D-erythritol 4-phosphate + NADP(+) = 1-deoxy-D-xylulose 5-phosphate + NADPH + H(+)</text>
        <dbReference type="Rhea" id="RHEA:13717"/>
        <dbReference type="ChEBI" id="CHEBI:15378"/>
        <dbReference type="ChEBI" id="CHEBI:57783"/>
        <dbReference type="ChEBI" id="CHEBI:57792"/>
        <dbReference type="ChEBI" id="CHEBI:58262"/>
        <dbReference type="ChEBI" id="CHEBI:58349"/>
        <dbReference type="EC" id="1.1.1.267"/>
    </reaction>
    <physiologicalReaction direction="right-to-left" evidence="1">
        <dbReference type="Rhea" id="RHEA:13719"/>
    </physiologicalReaction>
</comment>
<comment type="cofactor">
    <cofactor evidence="1">
        <name>Mg(2+)</name>
        <dbReference type="ChEBI" id="CHEBI:18420"/>
    </cofactor>
    <cofactor evidence="1">
        <name>Mn(2+)</name>
        <dbReference type="ChEBI" id="CHEBI:29035"/>
    </cofactor>
</comment>
<comment type="pathway">
    <text evidence="1">Isoprenoid biosynthesis; isopentenyl diphosphate biosynthesis via DXP pathway; isopentenyl diphosphate from 1-deoxy-D-xylulose 5-phosphate: step 1/6.</text>
</comment>
<comment type="similarity">
    <text evidence="1">Belongs to the DXR family.</text>
</comment>
<comment type="sequence caution" evidence="3">
    <conflict type="erroneous initiation">
        <sequence resource="EMBL-CDS" id="CAD74313"/>
    </conflict>
</comment>
<protein>
    <recommendedName>
        <fullName evidence="1">1-deoxy-D-xylulose 5-phosphate reductoisomerase</fullName>
        <shortName evidence="1">DXP reductoisomerase</shortName>
        <ecNumber evidence="1">1.1.1.267</ecNumber>
    </recommendedName>
    <alternativeName>
        <fullName evidence="1">1-deoxyxylulose-5-phosphate reductoisomerase</fullName>
    </alternativeName>
    <alternativeName>
        <fullName evidence="1">2-C-methyl-D-erythritol 4-phosphate synthase</fullName>
    </alternativeName>
</protein>
<feature type="chain" id="PRO_0000163705" description="1-deoxy-D-xylulose 5-phosphate reductoisomerase">
    <location>
        <begin position="1"/>
        <end position="455"/>
    </location>
</feature>
<feature type="region of interest" description="Disordered" evidence="2">
    <location>
        <begin position="205"/>
        <end position="233"/>
    </location>
</feature>
<feature type="compositionally biased region" description="Polar residues" evidence="2">
    <location>
        <begin position="205"/>
        <end position="214"/>
    </location>
</feature>
<feature type="binding site" evidence="1">
    <location>
        <position position="30"/>
    </location>
    <ligand>
        <name>NADPH</name>
        <dbReference type="ChEBI" id="CHEBI:57783"/>
    </ligand>
</feature>
<feature type="binding site" evidence="1">
    <location>
        <position position="31"/>
    </location>
    <ligand>
        <name>NADPH</name>
        <dbReference type="ChEBI" id="CHEBI:57783"/>
    </ligand>
</feature>
<feature type="binding site" evidence="1">
    <location>
        <position position="32"/>
    </location>
    <ligand>
        <name>NADPH</name>
        <dbReference type="ChEBI" id="CHEBI:57783"/>
    </ligand>
</feature>
<feature type="binding site" evidence="1">
    <location>
        <position position="33"/>
    </location>
    <ligand>
        <name>NADPH</name>
        <dbReference type="ChEBI" id="CHEBI:57783"/>
    </ligand>
</feature>
<feature type="binding site" evidence="1">
    <location>
        <position position="63"/>
    </location>
    <ligand>
        <name>NADPH</name>
        <dbReference type="ChEBI" id="CHEBI:57783"/>
    </ligand>
</feature>
<feature type="binding site" evidence="1">
    <location>
        <position position="159"/>
    </location>
    <ligand>
        <name>NADPH</name>
        <dbReference type="ChEBI" id="CHEBI:57783"/>
    </ligand>
</feature>
<feature type="binding site" evidence="1">
    <location>
        <position position="160"/>
    </location>
    <ligand>
        <name>1-deoxy-D-xylulose 5-phosphate</name>
        <dbReference type="ChEBI" id="CHEBI:57792"/>
    </ligand>
</feature>
<feature type="binding site" evidence="1">
    <location>
        <position position="161"/>
    </location>
    <ligand>
        <name>NADPH</name>
        <dbReference type="ChEBI" id="CHEBI:57783"/>
    </ligand>
</feature>
<feature type="binding site" evidence="1">
    <location>
        <position position="185"/>
    </location>
    <ligand>
        <name>Mn(2+)</name>
        <dbReference type="ChEBI" id="CHEBI:29035"/>
    </ligand>
</feature>
<feature type="binding site" evidence="1">
    <location>
        <position position="186"/>
    </location>
    <ligand>
        <name>1-deoxy-D-xylulose 5-phosphate</name>
        <dbReference type="ChEBI" id="CHEBI:57792"/>
    </ligand>
</feature>
<feature type="binding site" evidence="1">
    <location>
        <position position="187"/>
    </location>
    <ligand>
        <name>1-deoxy-D-xylulose 5-phosphate</name>
        <dbReference type="ChEBI" id="CHEBI:57792"/>
    </ligand>
</feature>
<feature type="binding site" evidence="1">
    <location>
        <position position="187"/>
    </location>
    <ligand>
        <name>Mn(2+)</name>
        <dbReference type="ChEBI" id="CHEBI:29035"/>
    </ligand>
</feature>
<feature type="binding site" evidence="1">
    <location>
        <position position="246"/>
    </location>
    <ligand>
        <name>1-deoxy-D-xylulose 5-phosphate</name>
        <dbReference type="ChEBI" id="CHEBI:57792"/>
    </ligand>
</feature>
<feature type="binding site" evidence="1">
    <location>
        <position position="269"/>
    </location>
    <ligand>
        <name>1-deoxy-D-xylulose 5-phosphate</name>
        <dbReference type="ChEBI" id="CHEBI:57792"/>
    </ligand>
</feature>
<feature type="binding site" evidence="1">
    <location>
        <position position="275"/>
    </location>
    <ligand>
        <name>NADPH</name>
        <dbReference type="ChEBI" id="CHEBI:57783"/>
    </ligand>
</feature>
<feature type="binding site" evidence="1">
    <location>
        <position position="282"/>
    </location>
    <ligand>
        <name>1-deoxy-D-xylulose 5-phosphate</name>
        <dbReference type="ChEBI" id="CHEBI:57792"/>
    </ligand>
</feature>
<feature type="binding site" evidence="1">
    <location>
        <position position="287"/>
    </location>
    <ligand>
        <name>1-deoxy-D-xylulose 5-phosphate</name>
        <dbReference type="ChEBI" id="CHEBI:57792"/>
    </ligand>
</feature>
<feature type="binding site" evidence="1">
    <location>
        <position position="288"/>
    </location>
    <ligand>
        <name>1-deoxy-D-xylulose 5-phosphate</name>
        <dbReference type="ChEBI" id="CHEBI:57792"/>
    </ligand>
</feature>
<feature type="binding site" evidence="1">
    <location>
        <position position="291"/>
    </location>
    <ligand>
        <name>1-deoxy-D-xylulose 5-phosphate</name>
        <dbReference type="ChEBI" id="CHEBI:57792"/>
    </ligand>
</feature>
<feature type="binding site" evidence="1">
    <location>
        <position position="291"/>
    </location>
    <ligand>
        <name>Mn(2+)</name>
        <dbReference type="ChEBI" id="CHEBI:29035"/>
    </ligand>
</feature>
<dbReference type="EC" id="1.1.1.267" evidence="1"/>
<dbReference type="EMBL" id="BX294142">
    <property type="protein sequence ID" value="CAD74313.1"/>
    <property type="status" value="ALT_INIT"/>
    <property type="molecule type" value="Genomic_DNA"/>
</dbReference>
<dbReference type="RefSeq" id="NP_866773.1">
    <property type="nucleotide sequence ID" value="NC_005027.1"/>
</dbReference>
<dbReference type="RefSeq" id="WP_164921880.1">
    <property type="nucleotide sequence ID" value="NC_005027.1"/>
</dbReference>
<dbReference type="SMR" id="Q7URM5"/>
<dbReference type="FunCoup" id="Q7URM5">
    <property type="interactions" value="322"/>
</dbReference>
<dbReference type="STRING" id="243090.RB5568"/>
<dbReference type="EnsemblBacteria" id="CAD74313">
    <property type="protein sequence ID" value="CAD74313"/>
    <property type="gene ID" value="RB5568"/>
</dbReference>
<dbReference type="KEGG" id="rba:RB5568"/>
<dbReference type="PATRIC" id="fig|243090.15.peg.2671"/>
<dbReference type="eggNOG" id="COG0743">
    <property type="taxonomic scope" value="Bacteria"/>
</dbReference>
<dbReference type="HOGENOM" id="CLU_035714_4_0_0"/>
<dbReference type="InParanoid" id="Q7URM5"/>
<dbReference type="OrthoDB" id="9806546at2"/>
<dbReference type="UniPathway" id="UPA00056">
    <property type="reaction ID" value="UER00092"/>
</dbReference>
<dbReference type="Proteomes" id="UP000001025">
    <property type="component" value="Chromosome"/>
</dbReference>
<dbReference type="GO" id="GO:0030604">
    <property type="term" value="F:1-deoxy-D-xylulose-5-phosphate reductoisomerase activity"/>
    <property type="evidence" value="ECO:0000318"/>
    <property type="project" value="GO_Central"/>
</dbReference>
<dbReference type="GO" id="GO:0030145">
    <property type="term" value="F:manganese ion binding"/>
    <property type="evidence" value="ECO:0000318"/>
    <property type="project" value="GO_Central"/>
</dbReference>
<dbReference type="GO" id="GO:0070402">
    <property type="term" value="F:NADPH binding"/>
    <property type="evidence" value="ECO:0000318"/>
    <property type="project" value="GO_Central"/>
</dbReference>
<dbReference type="GO" id="GO:0051484">
    <property type="term" value="P:isopentenyl diphosphate biosynthetic process, methylerythritol 4-phosphate pathway involved in terpenoid biosynthetic process"/>
    <property type="evidence" value="ECO:0000318"/>
    <property type="project" value="GO_Central"/>
</dbReference>
<dbReference type="FunFam" id="3.40.50.720:FF:000045">
    <property type="entry name" value="1-deoxy-D-xylulose 5-phosphate reductoisomerase"/>
    <property type="match status" value="1"/>
</dbReference>
<dbReference type="Gene3D" id="1.10.1740.10">
    <property type="match status" value="1"/>
</dbReference>
<dbReference type="Gene3D" id="3.40.50.720">
    <property type="entry name" value="NAD(P)-binding Rossmann-like Domain"/>
    <property type="match status" value="1"/>
</dbReference>
<dbReference type="HAMAP" id="MF_00183">
    <property type="entry name" value="DXP_reductoisom"/>
    <property type="match status" value="1"/>
</dbReference>
<dbReference type="InterPro" id="IPR003821">
    <property type="entry name" value="DXP_reductoisomerase"/>
</dbReference>
<dbReference type="InterPro" id="IPR013644">
    <property type="entry name" value="DXP_reductoisomerase_C"/>
</dbReference>
<dbReference type="InterPro" id="IPR013512">
    <property type="entry name" value="DXP_reductoisomerase_N"/>
</dbReference>
<dbReference type="InterPro" id="IPR026877">
    <property type="entry name" value="DXPR_C"/>
</dbReference>
<dbReference type="InterPro" id="IPR036169">
    <property type="entry name" value="DXPR_C_sf"/>
</dbReference>
<dbReference type="InterPro" id="IPR036291">
    <property type="entry name" value="NAD(P)-bd_dom_sf"/>
</dbReference>
<dbReference type="NCBIfam" id="TIGR00243">
    <property type="entry name" value="Dxr"/>
    <property type="match status" value="1"/>
</dbReference>
<dbReference type="PANTHER" id="PTHR30525">
    <property type="entry name" value="1-DEOXY-D-XYLULOSE 5-PHOSPHATE REDUCTOISOMERASE"/>
    <property type="match status" value="1"/>
</dbReference>
<dbReference type="PANTHER" id="PTHR30525:SF0">
    <property type="entry name" value="1-DEOXY-D-XYLULOSE 5-PHOSPHATE REDUCTOISOMERASE, CHLOROPLASTIC"/>
    <property type="match status" value="1"/>
</dbReference>
<dbReference type="Pfam" id="PF08436">
    <property type="entry name" value="DXP_redisom_C"/>
    <property type="match status" value="1"/>
</dbReference>
<dbReference type="Pfam" id="PF02670">
    <property type="entry name" value="DXP_reductoisom"/>
    <property type="match status" value="1"/>
</dbReference>
<dbReference type="Pfam" id="PF13288">
    <property type="entry name" value="DXPR_C"/>
    <property type="match status" value="1"/>
</dbReference>
<dbReference type="PIRSF" id="PIRSF006205">
    <property type="entry name" value="Dxp_reductismrs"/>
    <property type="match status" value="1"/>
</dbReference>
<dbReference type="SUPFAM" id="SSF69055">
    <property type="entry name" value="1-deoxy-D-xylulose-5-phosphate reductoisomerase, C-terminal domain"/>
    <property type="match status" value="1"/>
</dbReference>
<dbReference type="SUPFAM" id="SSF55347">
    <property type="entry name" value="Glyceraldehyde-3-phosphate dehydrogenase-like, C-terminal domain"/>
    <property type="match status" value="1"/>
</dbReference>
<dbReference type="SUPFAM" id="SSF51735">
    <property type="entry name" value="NAD(P)-binding Rossmann-fold domains"/>
    <property type="match status" value="1"/>
</dbReference>
<proteinExistence type="inferred from homology"/>
<reference key="1">
    <citation type="journal article" date="2003" name="Proc. Natl. Acad. Sci. U.S.A.">
        <title>Complete genome sequence of the marine planctomycete Pirellula sp. strain 1.</title>
        <authorList>
            <person name="Gloeckner F.O."/>
            <person name="Kube M."/>
            <person name="Bauer M."/>
            <person name="Teeling H."/>
            <person name="Lombardot T."/>
            <person name="Ludwig W."/>
            <person name="Gade D."/>
            <person name="Beck A."/>
            <person name="Borzym K."/>
            <person name="Heitmann K."/>
            <person name="Rabus R."/>
            <person name="Schlesner H."/>
            <person name="Amann R."/>
            <person name="Reinhardt R."/>
        </authorList>
    </citation>
    <scope>NUCLEOTIDE SEQUENCE [LARGE SCALE GENOMIC DNA]</scope>
    <source>
        <strain>DSM 10527 / NCIMB 13988 / SH1</strain>
    </source>
</reference>
<keyword id="KW-0414">Isoprene biosynthesis</keyword>
<keyword id="KW-0464">Manganese</keyword>
<keyword id="KW-0479">Metal-binding</keyword>
<keyword id="KW-0521">NADP</keyword>
<keyword id="KW-0560">Oxidoreductase</keyword>
<keyword id="KW-1185">Reference proteome</keyword>
<accession>Q7URM5</accession>
<evidence type="ECO:0000255" key="1">
    <source>
        <dbReference type="HAMAP-Rule" id="MF_00183"/>
    </source>
</evidence>
<evidence type="ECO:0000256" key="2">
    <source>
        <dbReference type="SAM" id="MobiDB-lite"/>
    </source>
</evidence>
<evidence type="ECO:0000305" key="3"/>
<gene>
    <name evidence="1" type="primary">dxr</name>
    <name type="ordered locus">RB5568</name>
</gene>
<organism>
    <name type="scientific">Rhodopirellula baltica (strain DSM 10527 / NCIMB 13988 / SH1)</name>
    <dbReference type="NCBI Taxonomy" id="243090"/>
    <lineage>
        <taxon>Bacteria</taxon>
        <taxon>Pseudomonadati</taxon>
        <taxon>Planctomycetota</taxon>
        <taxon>Planctomycetia</taxon>
        <taxon>Pirellulales</taxon>
        <taxon>Pirellulaceae</taxon>
        <taxon>Rhodopirellula</taxon>
    </lineage>
</organism>
<sequence length="455" mass="48939">MPAESISADSVPDFRSTNRPVSRVAVLGATGSIGVAALDVIENLNRCDPDFAWEVSSMSGHSQIDPLIELAGGCHTPPKCVVVSDAEMEAQAAKALRTASTQTSSRLTERCRLDVGPDALVRAATENDVDVVVAAIVGRAGLESTLAAVHAGKRVALANKETLVVAGPVVTRAAANNGAQLLPVDSEHSAIFQCLAESRARQSQYATAKQSIQPESVRATDPPSSTTDSPAKTHWPGVRRLILTASGGPFRDWTTAQMREATIEQALAHPTWKMGAKITIDSASMMNKALEVIEAKWLFDVPADKIEVVVHPQSLIHSLVEFEDGSLIAQVSPPDMRIPIQYALTYPRRLPCPAPELDRSQAWDMSLCPADPDRFPALALGFEVARVGGTAGAVVNAANETAVDLFLHGQIRFTDIPEICRRTLLDHDHESSPTLERLLKLDVWARARARELAQI</sequence>